<proteinExistence type="evidence at transcript level"/>
<protein>
    <recommendedName>
        <fullName>Steroid 17-alpha-hydroxylase/17,20 lyase</fullName>
        <ecNumber evidence="2">1.14.14.19</ecNumber>
    </recommendedName>
    <alternativeName>
        <fullName>17-alpha-hydroxyprogesterone aldolase</fullName>
        <ecNumber evidence="2">1.14.14.32</ecNumber>
    </alternativeName>
    <alternativeName>
        <fullName>CYPXVII</fullName>
    </alternativeName>
    <alternativeName>
        <fullName>Cytochrome P450 17A1</fullName>
    </alternativeName>
    <alternativeName>
        <fullName>Cytochrome P450-C17</fullName>
        <shortName>Cytochrome P450c17</shortName>
    </alternativeName>
    <alternativeName>
        <fullName>Steroid 17-alpha-monooxygenase</fullName>
    </alternativeName>
</protein>
<sequence length="508" mass="57619">MWELVALLLLTLAYLFWPKRRCPGAKYPKSLLSLPLVGSLPFLPRHGHMHNNFFKLQKKYGPIYSVRMGTKTTVIVGHHQLAKEVLIKKGKDFSGRPQVTTLDILSNNRKGIAFADYGAHWQLHRRLAMATFALFKDGDQKLEKIICQEISTLCDMLATHNGQTIDISFPVFVAITNVISLICFNISYKNGDPELKIVHNYNEGIIDSLGKESLVDLFPWLKVFPNKTLEKLKRHVKTRNDLLTKIFENYKEKFHSDSITNMLDVLMQAKMNSDNGNAGPDQDSELLSDNHILTTIGDIFGAGVETTTSVVKWIVAFLLHNPQVKKKLYEEIDQNVGFSRTPTISDRNRLLLLEATIREVLRIRPVAPMLIPHKANVDSSIGEFAVDKGTHVIINLWALHHNEKEWHQPDQFMPERFLNPAGTQLISPSLSYLPFGAGPRSCIGEILARQELFLIMAWLLQRFDLEVPDDGQLPSLEGNPKVVFLIDSFKVKIKVRQAWREAQAEGST</sequence>
<accession>Q2XVA1</accession>
<name>CP17A_MACFA</name>
<feature type="chain" id="PRO_0000051932" description="Steroid 17-alpha-hydroxylase/17,20 lyase">
    <location>
        <begin position="1"/>
        <end position="508"/>
    </location>
</feature>
<feature type="binding site" evidence="2">
    <location>
        <position position="202"/>
    </location>
    <ligand>
        <name>substrate</name>
    </ligand>
</feature>
<feature type="binding site" description="axial binding residue" evidence="1">
    <location>
        <position position="442"/>
    </location>
    <ligand>
        <name>heme</name>
        <dbReference type="ChEBI" id="CHEBI:30413"/>
    </ligand>
    <ligandPart>
        <name>Fe</name>
        <dbReference type="ChEBI" id="CHEBI:18248"/>
    </ligandPart>
</feature>
<comment type="function">
    <text evidence="2">A cytochrome P450 monooxygenase involved in corticoid and androgen biosynthesis. Catalyzes 17-alpha hydroxylation of C21 steroids, which is common for both pathways. A second oxidative step, required only for androgen synthesis, involves an acyl-carbon cleavage. The 17-alpha hydroxy intermediates, as part of adrenal glucocorticoids biosynthesis pathway, are precursors of cortisol. Hydroxylates steroid hormones, pregnenolone and progesterone to form 17-alpha hydroxy metabolites, followed by the cleavage of the C17-C20 bond to form C19 steroids, dehydroepiandrosterone (DHEA) and androstenedione. Has 16-alpha hydroxylase activity. Catalyzes 16-alpha hydroxylation of 17-alpha hydroxy pregnenolone, followed by the cleavage of the C17-C20 bond to form 16-alpha-hydroxy DHEA. Also 16-alpha hydroxylates androgens, relevant for estriol synthesis. Mechanistically, uses molecular oxygen inserting one oxygen atom into a substrate, and reducing the second into a water molecule, with two electrons provided by NADPH via cytochrome P450 reductase (CPR; NADPH-ferrihemoprotein reductase).</text>
</comment>
<comment type="catalytic activity">
    <reaction evidence="2">
        <text>a C21-steroid + reduced [NADPH--hemoprotein reductase] + O2 = a 17alpha-hydroxy-C21-steroid + oxidized [NADPH--hemoprotein reductase] + H2O + H(+)</text>
        <dbReference type="Rhea" id="RHEA:65760"/>
        <dbReference type="Rhea" id="RHEA-COMP:11964"/>
        <dbReference type="Rhea" id="RHEA-COMP:11965"/>
        <dbReference type="ChEBI" id="CHEBI:15377"/>
        <dbReference type="ChEBI" id="CHEBI:15378"/>
        <dbReference type="ChEBI" id="CHEBI:15379"/>
        <dbReference type="ChEBI" id="CHEBI:57618"/>
        <dbReference type="ChEBI" id="CHEBI:58210"/>
        <dbReference type="ChEBI" id="CHEBI:61313"/>
        <dbReference type="ChEBI" id="CHEBI:138141"/>
        <dbReference type="EC" id="1.14.14.19"/>
    </reaction>
    <physiologicalReaction direction="left-to-right" evidence="2">
        <dbReference type="Rhea" id="RHEA:65761"/>
    </physiologicalReaction>
</comment>
<comment type="catalytic activity">
    <reaction evidence="2">
        <text>progesterone + reduced [NADPH--hemoprotein reductase] + O2 = 17alpha-hydroxyprogesterone + oxidized [NADPH--hemoprotein reductase] + H2O + H(+)</text>
        <dbReference type="Rhea" id="RHEA:46308"/>
        <dbReference type="Rhea" id="RHEA-COMP:11964"/>
        <dbReference type="Rhea" id="RHEA-COMP:11965"/>
        <dbReference type="ChEBI" id="CHEBI:15377"/>
        <dbReference type="ChEBI" id="CHEBI:15378"/>
        <dbReference type="ChEBI" id="CHEBI:15379"/>
        <dbReference type="ChEBI" id="CHEBI:17026"/>
        <dbReference type="ChEBI" id="CHEBI:17252"/>
        <dbReference type="ChEBI" id="CHEBI:57618"/>
        <dbReference type="ChEBI" id="CHEBI:58210"/>
        <dbReference type="EC" id="1.14.14.19"/>
    </reaction>
    <physiologicalReaction direction="left-to-right" evidence="2">
        <dbReference type="Rhea" id="RHEA:46309"/>
    </physiologicalReaction>
</comment>
<comment type="catalytic activity">
    <reaction evidence="2">
        <text>pregnenolone + reduced [NADPH--hemoprotein reductase] + O2 = 17alpha-hydroxypregnenolone + oxidized [NADPH--hemoprotein reductase] + H2O + H(+)</text>
        <dbReference type="Rhea" id="RHEA:50236"/>
        <dbReference type="Rhea" id="RHEA-COMP:11964"/>
        <dbReference type="Rhea" id="RHEA-COMP:11965"/>
        <dbReference type="ChEBI" id="CHEBI:15377"/>
        <dbReference type="ChEBI" id="CHEBI:15378"/>
        <dbReference type="ChEBI" id="CHEBI:15379"/>
        <dbReference type="ChEBI" id="CHEBI:16581"/>
        <dbReference type="ChEBI" id="CHEBI:28750"/>
        <dbReference type="ChEBI" id="CHEBI:57618"/>
        <dbReference type="ChEBI" id="CHEBI:58210"/>
        <dbReference type="EC" id="1.14.14.19"/>
    </reaction>
    <physiologicalReaction direction="left-to-right" evidence="2">
        <dbReference type="Rhea" id="RHEA:50237"/>
    </physiologicalReaction>
</comment>
<comment type="catalytic activity">
    <reaction evidence="2">
        <text>17alpha-hydroxyprogesterone + reduced [NADPH--hemoprotein reductase] + O2 = androst-4-ene-3,17-dione + acetate + oxidized [NADPH--hemoprotein reductase] + H2O + 2 H(+)</text>
        <dbReference type="Rhea" id="RHEA:14753"/>
        <dbReference type="Rhea" id="RHEA-COMP:11964"/>
        <dbReference type="Rhea" id="RHEA-COMP:11965"/>
        <dbReference type="ChEBI" id="CHEBI:15377"/>
        <dbReference type="ChEBI" id="CHEBI:15378"/>
        <dbReference type="ChEBI" id="CHEBI:15379"/>
        <dbReference type="ChEBI" id="CHEBI:16422"/>
        <dbReference type="ChEBI" id="CHEBI:17252"/>
        <dbReference type="ChEBI" id="CHEBI:30089"/>
        <dbReference type="ChEBI" id="CHEBI:57618"/>
        <dbReference type="ChEBI" id="CHEBI:58210"/>
        <dbReference type="EC" id="1.14.14.32"/>
    </reaction>
    <physiologicalReaction direction="left-to-right" evidence="2">
        <dbReference type="Rhea" id="RHEA:14754"/>
    </physiologicalReaction>
</comment>
<comment type="catalytic activity">
    <reaction evidence="2">
        <text>17alpha-hydroxyprogesterone + reduced [NADPH--hemoprotein reductase] + O2 = 16alpha,17alpha-dihydroxyprogesterone + oxidized [NADPH--hemoprotein reductase] + H2O + H(+)</text>
        <dbReference type="Rhea" id="RHEA:53216"/>
        <dbReference type="Rhea" id="RHEA-COMP:11964"/>
        <dbReference type="Rhea" id="RHEA-COMP:11965"/>
        <dbReference type="ChEBI" id="CHEBI:763"/>
        <dbReference type="ChEBI" id="CHEBI:15377"/>
        <dbReference type="ChEBI" id="CHEBI:15378"/>
        <dbReference type="ChEBI" id="CHEBI:15379"/>
        <dbReference type="ChEBI" id="CHEBI:17252"/>
        <dbReference type="ChEBI" id="CHEBI:57618"/>
        <dbReference type="ChEBI" id="CHEBI:58210"/>
    </reaction>
    <physiologicalReaction direction="left-to-right" evidence="2">
        <dbReference type="Rhea" id="RHEA:53217"/>
    </physiologicalReaction>
</comment>
<comment type="catalytic activity">
    <reaction evidence="2">
        <text>16alpha,17alpha-dihydroxyprogesterone + reduced [NADPH--hemoprotein reductase] + O2 = 6beta,16alpha,17alpha-trihydroxyprogesterone + oxidized [NADPH--hemoprotein reductase] + H2O + H(+)</text>
        <dbReference type="Rhea" id="RHEA:53220"/>
        <dbReference type="Rhea" id="RHEA-COMP:11964"/>
        <dbReference type="Rhea" id="RHEA-COMP:11965"/>
        <dbReference type="ChEBI" id="CHEBI:763"/>
        <dbReference type="ChEBI" id="CHEBI:15377"/>
        <dbReference type="ChEBI" id="CHEBI:15378"/>
        <dbReference type="ChEBI" id="CHEBI:15379"/>
        <dbReference type="ChEBI" id="CHEBI:57618"/>
        <dbReference type="ChEBI" id="CHEBI:58210"/>
        <dbReference type="ChEBI" id="CHEBI:137046"/>
    </reaction>
    <physiologicalReaction direction="left-to-right" evidence="2">
        <dbReference type="Rhea" id="RHEA:53221"/>
    </physiologicalReaction>
</comment>
<comment type="catalytic activity">
    <reaction evidence="2">
        <text>17alpha-hydroxypregnenolone + reduced [NADPH--hemoprotein reductase] + O2 = 3beta-hydroxyandrost-5-en-17-one + acetate + oxidized [NADPH--hemoprotein reductase] + H2O + 2 H(+)</text>
        <dbReference type="Rhea" id="RHEA:50244"/>
        <dbReference type="Rhea" id="RHEA-COMP:11964"/>
        <dbReference type="Rhea" id="RHEA-COMP:11965"/>
        <dbReference type="ChEBI" id="CHEBI:15377"/>
        <dbReference type="ChEBI" id="CHEBI:15378"/>
        <dbReference type="ChEBI" id="CHEBI:15379"/>
        <dbReference type="ChEBI" id="CHEBI:28689"/>
        <dbReference type="ChEBI" id="CHEBI:28750"/>
        <dbReference type="ChEBI" id="CHEBI:30089"/>
        <dbReference type="ChEBI" id="CHEBI:57618"/>
        <dbReference type="ChEBI" id="CHEBI:58210"/>
        <dbReference type="EC" id="1.14.14.32"/>
    </reaction>
    <physiologicalReaction direction="left-to-right" evidence="2">
        <dbReference type="Rhea" id="RHEA:50245"/>
    </physiologicalReaction>
</comment>
<comment type="catalytic activity">
    <reaction evidence="2">
        <text>16alpha,17alpha-dihydroxypregnenolone + reduced [NADPH--hemoprotein reductase] + O2 = 3beta,16alpha-dihydroxy-androst-5-en-17-one + acetate + oxidized [NADPH--hemoprotein reductase] + H2O + 2 H(+)</text>
        <dbReference type="Rhea" id="RHEA:53224"/>
        <dbReference type="Rhea" id="RHEA-COMP:11964"/>
        <dbReference type="Rhea" id="RHEA-COMP:11965"/>
        <dbReference type="ChEBI" id="CHEBI:15377"/>
        <dbReference type="ChEBI" id="CHEBI:15378"/>
        <dbReference type="ChEBI" id="CHEBI:15379"/>
        <dbReference type="ChEBI" id="CHEBI:27771"/>
        <dbReference type="ChEBI" id="CHEBI:30089"/>
        <dbReference type="ChEBI" id="CHEBI:57618"/>
        <dbReference type="ChEBI" id="CHEBI:58210"/>
        <dbReference type="ChEBI" id="CHEBI:137049"/>
    </reaction>
    <physiologicalReaction direction="left-to-right" evidence="2">
        <dbReference type="Rhea" id="RHEA:53225"/>
    </physiologicalReaction>
</comment>
<comment type="catalytic activity">
    <reaction evidence="2">
        <text>3beta-hydroxyandrost-5-en-17-one + reduced [NADPH--hemoprotein reductase] + O2 = 3beta,16alpha-dihydroxy-androst-5-en-17-one + oxidized [NADPH--hemoprotein reductase] + H2O + H(+)</text>
        <dbReference type="Rhea" id="RHEA:47220"/>
        <dbReference type="Rhea" id="RHEA-COMP:11964"/>
        <dbReference type="Rhea" id="RHEA-COMP:11965"/>
        <dbReference type="ChEBI" id="CHEBI:15377"/>
        <dbReference type="ChEBI" id="CHEBI:15378"/>
        <dbReference type="ChEBI" id="CHEBI:15379"/>
        <dbReference type="ChEBI" id="CHEBI:27771"/>
        <dbReference type="ChEBI" id="CHEBI:28689"/>
        <dbReference type="ChEBI" id="CHEBI:57618"/>
        <dbReference type="ChEBI" id="CHEBI:58210"/>
    </reaction>
    <physiologicalReaction direction="left-to-right" evidence="2">
        <dbReference type="Rhea" id="RHEA:47221"/>
    </physiologicalReaction>
</comment>
<comment type="catalytic activity">
    <reaction evidence="2">
        <text>androst-4-ene-3,17-dione + reduced [NADPH--hemoprotein reductase] + O2 = 16alpha-hydroxyandrost-4-ene-3,17-dione + oxidized [NADPH--hemoprotein reductase] + H2O + H(+)</text>
        <dbReference type="Rhea" id="RHEA:53228"/>
        <dbReference type="Rhea" id="RHEA-COMP:11964"/>
        <dbReference type="Rhea" id="RHEA-COMP:11965"/>
        <dbReference type="ChEBI" id="CHEBI:15377"/>
        <dbReference type="ChEBI" id="CHEBI:15378"/>
        <dbReference type="ChEBI" id="CHEBI:15379"/>
        <dbReference type="ChEBI" id="CHEBI:16422"/>
        <dbReference type="ChEBI" id="CHEBI:27582"/>
        <dbReference type="ChEBI" id="CHEBI:57618"/>
        <dbReference type="ChEBI" id="CHEBI:58210"/>
    </reaction>
    <physiologicalReaction direction="left-to-right" evidence="2">
        <dbReference type="Rhea" id="RHEA:53229"/>
    </physiologicalReaction>
</comment>
<comment type="cofactor">
    <cofactor evidence="2">
        <name>heme</name>
        <dbReference type="ChEBI" id="CHEBI:30413"/>
    </cofactor>
</comment>
<comment type="activity regulation">
    <text evidence="2">Regulated predominantly by intracellular cAMP levels. The 17,20-lyase activity is stimulated by cytochrome b5, which acts as an allosteric effector increasing the Vmax of the lyase activity.</text>
</comment>
<comment type="pathway">
    <text evidence="2">Steroid hormone biosynthesis.</text>
</comment>
<comment type="pathway">
    <text evidence="2">Steroid biosynthesis; glucocorticoid biosynthesis.</text>
</comment>
<comment type="subcellular location">
    <subcellularLocation>
        <location evidence="2">Endoplasmic reticulum membrane</location>
    </subcellularLocation>
    <subcellularLocation>
        <location evidence="2">Microsome membrane</location>
    </subcellularLocation>
</comment>
<comment type="similarity">
    <text evidence="3">Belongs to the cytochrome P450 family.</text>
</comment>
<dbReference type="EC" id="1.14.14.19" evidence="2"/>
<dbReference type="EC" id="1.14.14.32" evidence="2"/>
<dbReference type="EMBL" id="DQ228167">
    <property type="protein sequence ID" value="ABB76808.1"/>
    <property type="molecule type" value="mRNA"/>
</dbReference>
<dbReference type="RefSeq" id="NP_001306420.1">
    <property type="nucleotide sequence ID" value="NM_001319491.1"/>
</dbReference>
<dbReference type="RefSeq" id="XP_045218151.1">
    <property type="nucleotide sequence ID" value="XM_045362216.2"/>
</dbReference>
<dbReference type="SMR" id="Q2XVA1"/>
<dbReference type="STRING" id="9541.ENSMFAP00000004698"/>
<dbReference type="BindingDB" id="Q2XVA1"/>
<dbReference type="ChEMBL" id="CHEMBL3779754"/>
<dbReference type="GeneID" id="102133235"/>
<dbReference type="eggNOG" id="KOG0156">
    <property type="taxonomic scope" value="Eukaryota"/>
</dbReference>
<dbReference type="UniPathway" id="UPA00788"/>
<dbReference type="Proteomes" id="UP000233100">
    <property type="component" value="Unplaced"/>
</dbReference>
<dbReference type="GO" id="GO:0005789">
    <property type="term" value="C:endoplasmic reticulum membrane"/>
    <property type="evidence" value="ECO:0007669"/>
    <property type="project" value="UniProtKB-SubCell"/>
</dbReference>
<dbReference type="GO" id="GO:0020037">
    <property type="term" value="F:heme binding"/>
    <property type="evidence" value="ECO:0000250"/>
    <property type="project" value="UniProtKB"/>
</dbReference>
<dbReference type="GO" id="GO:0005506">
    <property type="term" value="F:iron ion binding"/>
    <property type="evidence" value="ECO:0007669"/>
    <property type="project" value="InterPro"/>
</dbReference>
<dbReference type="GO" id="GO:0016829">
    <property type="term" value="F:lyase activity"/>
    <property type="evidence" value="ECO:0007669"/>
    <property type="project" value="UniProtKB-KW"/>
</dbReference>
<dbReference type="GO" id="GO:0004508">
    <property type="term" value="F:steroid 17-alpha-monooxygenase activity"/>
    <property type="evidence" value="ECO:0000250"/>
    <property type="project" value="UniProtKB"/>
</dbReference>
<dbReference type="GO" id="GO:0006704">
    <property type="term" value="P:glucocorticoid biosynthetic process"/>
    <property type="evidence" value="ECO:0007669"/>
    <property type="project" value="UniProtKB-UniPathway"/>
</dbReference>
<dbReference type="GO" id="GO:0042446">
    <property type="term" value="P:hormone biosynthetic process"/>
    <property type="evidence" value="ECO:0000250"/>
    <property type="project" value="UniProtKB"/>
</dbReference>
<dbReference type="GO" id="GO:0042448">
    <property type="term" value="P:progesterone metabolic process"/>
    <property type="evidence" value="ECO:0000250"/>
    <property type="project" value="UniProtKB"/>
</dbReference>
<dbReference type="GO" id="GO:0008202">
    <property type="term" value="P:steroid metabolic process"/>
    <property type="evidence" value="ECO:0000250"/>
    <property type="project" value="UniProtKB"/>
</dbReference>
<dbReference type="CDD" id="cd20673">
    <property type="entry name" value="CYP17A1"/>
    <property type="match status" value="1"/>
</dbReference>
<dbReference type="FunFam" id="1.10.630.10:FF:000002">
    <property type="entry name" value="Cytochrome P450 1A1"/>
    <property type="match status" value="1"/>
</dbReference>
<dbReference type="Gene3D" id="1.10.630.10">
    <property type="entry name" value="Cytochrome P450"/>
    <property type="match status" value="1"/>
</dbReference>
<dbReference type="InterPro" id="IPR001128">
    <property type="entry name" value="Cyt_P450"/>
</dbReference>
<dbReference type="InterPro" id="IPR017972">
    <property type="entry name" value="Cyt_P450_CS"/>
</dbReference>
<dbReference type="InterPro" id="IPR002401">
    <property type="entry name" value="Cyt_P450_E_grp-I"/>
</dbReference>
<dbReference type="InterPro" id="IPR036396">
    <property type="entry name" value="Cyt_P450_sf"/>
</dbReference>
<dbReference type="PANTHER" id="PTHR24289">
    <property type="entry name" value="STEROID 17-ALPHA-HYDROXYLASE/17,20 LYASE"/>
    <property type="match status" value="1"/>
</dbReference>
<dbReference type="PANTHER" id="PTHR24289:SF13">
    <property type="entry name" value="STEROID 17-ALPHA-HYDROXYLASE_17,20 LYASE"/>
    <property type="match status" value="1"/>
</dbReference>
<dbReference type="Pfam" id="PF00067">
    <property type="entry name" value="p450"/>
    <property type="match status" value="1"/>
</dbReference>
<dbReference type="PRINTS" id="PR00463">
    <property type="entry name" value="EP450I"/>
</dbReference>
<dbReference type="PRINTS" id="PR00385">
    <property type="entry name" value="P450"/>
</dbReference>
<dbReference type="SUPFAM" id="SSF48264">
    <property type="entry name" value="Cytochrome P450"/>
    <property type="match status" value="1"/>
</dbReference>
<dbReference type="PROSITE" id="PS00086">
    <property type="entry name" value="CYTOCHROME_P450"/>
    <property type="match status" value="1"/>
</dbReference>
<organism>
    <name type="scientific">Macaca fascicularis</name>
    <name type="common">Crab-eating macaque</name>
    <name type="synonym">Cynomolgus monkey</name>
    <dbReference type="NCBI Taxonomy" id="9541"/>
    <lineage>
        <taxon>Eukaryota</taxon>
        <taxon>Metazoa</taxon>
        <taxon>Chordata</taxon>
        <taxon>Craniata</taxon>
        <taxon>Vertebrata</taxon>
        <taxon>Euteleostomi</taxon>
        <taxon>Mammalia</taxon>
        <taxon>Eutheria</taxon>
        <taxon>Euarchontoglires</taxon>
        <taxon>Primates</taxon>
        <taxon>Haplorrhini</taxon>
        <taxon>Catarrhini</taxon>
        <taxon>Cercopithecidae</taxon>
        <taxon>Cercopithecinae</taxon>
        <taxon>Macaca</taxon>
    </lineage>
</organism>
<keyword id="KW-0256">Endoplasmic reticulum</keyword>
<keyword id="KW-0349">Heme</keyword>
<keyword id="KW-0408">Iron</keyword>
<keyword id="KW-0443">Lipid metabolism</keyword>
<keyword id="KW-0456">Lyase</keyword>
<keyword id="KW-0472">Membrane</keyword>
<keyword id="KW-0479">Metal-binding</keyword>
<keyword id="KW-0492">Microsome</keyword>
<keyword id="KW-0503">Monooxygenase</keyword>
<keyword id="KW-0560">Oxidoreductase</keyword>
<keyword id="KW-1185">Reference proteome</keyword>
<keyword id="KW-0755">Steroidogenesis</keyword>
<gene>
    <name type="primary">CYP17A1</name>
    <name type="synonym">CYP17</name>
</gene>
<reference key="1">
    <citation type="submission" date="2005-09" db="EMBL/GenBank/DDBJ databases">
        <authorList>
            <person name="Liu H."/>
            <person name="Larbie F."/>
            <person name="Luu-The V."/>
        </authorList>
    </citation>
    <scope>NUCLEOTIDE SEQUENCE [MRNA]</scope>
</reference>
<evidence type="ECO:0000250" key="1"/>
<evidence type="ECO:0000250" key="2">
    <source>
        <dbReference type="UniProtKB" id="P05093"/>
    </source>
</evidence>
<evidence type="ECO:0000305" key="3"/>